<gene>
    <name evidence="9" type="primary">tnpA</name>
    <name evidence="8" type="synonym">orf1</name>
    <name evidence="21" type="synonym">tnpB</name>
    <name evidence="14" type="ordered locus">DR_0667</name>
</gene>
<gene>
    <name evidence="15" type="ordered locus">DR_0979</name>
</gene>
<gene>
    <name evidence="16" type="ordered locus">DR_1382</name>
</gene>
<gene>
    <name evidence="17" type="ordered locus">DR_1592</name>
</gene>
<gene>
    <name evidence="18" type="ordered locus">DR_1652</name>
</gene>
<gene>
    <name evidence="19" type="ordered locus">DR_1932</name>
</gene>
<gene>
    <name evidence="20" type="ordered locus">DR_2323</name>
</gene>
<accession>Q7DF83</accession>
<accession>O83028</accession>
<keyword id="KW-0002">3D-structure</keyword>
<keyword id="KW-0233">DNA recombination</keyword>
<keyword id="KW-0238">DNA-binding</keyword>
<keyword id="KW-0255">Endonuclease</keyword>
<keyword id="KW-0378">Hydrolase</keyword>
<keyword id="KW-0460">Magnesium</keyword>
<keyword id="KW-0479">Metal-binding</keyword>
<keyword id="KW-0540">Nuclease</keyword>
<keyword id="KW-1185">Reference proteome</keyword>
<keyword id="KW-0346">Stress response</keyword>
<keyword id="KW-0814">Transposable element</keyword>
<keyword id="KW-0815">Transposition</keyword>
<feature type="chain" id="PRO_0000455635" description="ISDra2 transposase TnpA">
    <location>
        <begin position="1"/>
        <end position="140"/>
    </location>
</feature>
<feature type="region of interest" description="Mobile alpha helix" evidence="6">
    <location>
        <begin position="127"/>
        <end position="133"/>
    </location>
</feature>
<feature type="active site" description="Nucleophile" evidence="13">
    <location>
        <position position="132"/>
    </location>
</feature>
<feature type="binding site" evidence="13">
    <location>
        <position position="67"/>
    </location>
    <ligand>
        <name>Mg(2+)</name>
        <dbReference type="ChEBI" id="CHEBI:18420"/>
    </ligand>
</feature>
<feature type="binding site" evidence="13">
    <location>
        <position position="69"/>
    </location>
    <ligand>
        <name>Mg(2+)</name>
        <dbReference type="ChEBI" id="CHEBI:18420"/>
    </ligand>
</feature>
<feature type="binding site" evidence="13">
    <location>
        <position position="136"/>
    </location>
    <ligand>
        <name>Mg(2+)</name>
        <dbReference type="ChEBI" id="CHEBI:18420"/>
    </ligand>
</feature>
<feature type="site" description="Critical for recognizing and stabilizing G:T mismatch in DNA substrate" evidence="6">
    <location>
        <position position="14"/>
    </location>
</feature>
<feature type="mutagenesis site" description="60-fold decrease in excision frequency, 30-fold decrease in DNA binding." evidence="6">
    <original>R</original>
    <variation>A</variation>
    <location>
        <position position="14"/>
    </location>
</feature>
<feature type="mutagenesis site" description="2-fold decrease in excision frequency." evidence="6">
    <original>SE</original>
    <variation>GG</variation>
    <location>
        <begin position="122"/>
        <end position="123"/>
    </location>
</feature>
<feature type="strand" evidence="26">
    <location>
        <begin position="11"/>
        <end position="13"/>
    </location>
</feature>
<feature type="strand" evidence="26">
    <location>
        <begin position="16"/>
        <end position="28"/>
    </location>
</feature>
<feature type="helix" evidence="26">
    <location>
        <begin position="29"/>
        <end position="31"/>
    </location>
</feature>
<feature type="helix" evidence="26">
    <location>
        <begin position="37"/>
        <end position="53"/>
    </location>
</feature>
<feature type="strand" evidence="26">
    <location>
        <begin position="57"/>
        <end position="64"/>
    </location>
</feature>
<feature type="strand" evidence="26">
    <location>
        <begin position="67"/>
        <end position="74"/>
    </location>
</feature>
<feature type="helix" evidence="26">
    <location>
        <begin position="80"/>
        <end position="98"/>
    </location>
</feature>
<feature type="helix" evidence="26">
    <location>
        <begin position="100"/>
        <end position="104"/>
    </location>
</feature>
<feature type="strand" evidence="26">
    <location>
        <begin position="116"/>
        <end position="121"/>
    </location>
</feature>
<feature type="strand" evidence="26">
    <location>
        <begin position="123"/>
        <end position="125"/>
    </location>
</feature>
<feature type="helix" evidence="26">
    <location>
        <begin position="126"/>
        <end position="134"/>
    </location>
</feature>
<protein>
    <recommendedName>
        <fullName evidence="9">ISDra2 transposase TnpA</fullName>
        <shortName evidence="10">TnpA-Dra2</shortName>
    </recommendedName>
    <alternativeName>
        <fullName>Transposase for insertion sequence element IS200/IS605</fullName>
    </alternativeName>
</protein>
<dbReference type="EMBL" id="AB016803">
    <property type="protein sequence ID" value="BAA32389.1"/>
    <property type="molecule type" value="Genomic_DNA"/>
</dbReference>
<dbReference type="EMBL" id="AE000513">
    <property type="protein sequence ID" value="AAF10242.1"/>
    <property type="molecule type" value="Genomic_DNA"/>
</dbReference>
<dbReference type="EMBL" id="AE000513">
    <property type="protein sequence ID" value="AAF10556.1"/>
    <property type="molecule type" value="Genomic_DNA"/>
</dbReference>
<dbReference type="EMBL" id="AE000513">
    <property type="protein sequence ID" value="AAF10953.1"/>
    <property type="molecule type" value="Genomic_DNA"/>
</dbReference>
<dbReference type="EMBL" id="AE000513">
    <property type="protein sequence ID" value="AAF11155.1"/>
    <property type="molecule type" value="Genomic_DNA"/>
</dbReference>
<dbReference type="EMBL" id="AE000513">
    <property type="protein sequence ID" value="AAF11209.1"/>
    <property type="molecule type" value="Genomic_DNA"/>
</dbReference>
<dbReference type="EMBL" id="AE000513">
    <property type="protein sequence ID" value="AAF11485.1"/>
    <property type="molecule type" value="Genomic_DNA"/>
</dbReference>
<dbReference type="EMBL" id="AE000513">
    <property type="protein sequence ID" value="AAF11871.1"/>
    <property type="molecule type" value="Genomic_DNA"/>
</dbReference>
<dbReference type="PIR" id="F75335">
    <property type="entry name" value="F75335"/>
</dbReference>
<dbReference type="RefSeq" id="NP_294390.1">
    <property type="nucleotide sequence ID" value="NC_001263.1"/>
</dbReference>
<dbReference type="RefSeq" id="NP_294703.1">
    <property type="nucleotide sequence ID" value="NC_001263.1"/>
</dbReference>
<dbReference type="RefSeq" id="NP_295105.1">
    <property type="nucleotide sequence ID" value="NC_001263.1"/>
</dbReference>
<dbReference type="RefSeq" id="NP_295315.1">
    <property type="nucleotide sequence ID" value="NC_001263.1"/>
</dbReference>
<dbReference type="RefSeq" id="NP_295375.1">
    <property type="nucleotide sequence ID" value="NC_001263.1"/>
</dbReference>
<dbReference type="RefSeq" id="NP_295655.1">
    <property type="nucleotide sequence ID" value="NC_001263.1"/>
</dbReference>
<dbReference type="RefSeq" id="NP_296044.1">
    <property type="nucleotide sequence ID" value="NC_001263.1"/>
</dbReference>
<dbReference type="RefSeq" id="WP_010887312.1">
    <property type="nucleotide sequence ID" value="NC_001263.1"/>
</dbReference>
<dbReference type="PDB" id="2XM3">
    <property type="method" value="X-ray"/>
    <property type="resolution" value="2.30 A"/>
    <property type="chains" value="A/B/C/D/E/F=1-140"/>
</dbReference>
<dbReference type="PDB" id="2XMA">
    <property type="method" value="X-ray"/>
    <property type="resolution" value="2.30 A"/>
    <property type="chains" value="A/B/E/F=1-140"/>
</dbReference>
<dbReference type="PDB" id="2XO6">
    <property type="method" value="X-ray"/>
    <property type="resolution" value="1.90 A"/>
    <property type="chains" value="A/D=1-140"/>
</dbReference>
<dbReference type="PDB" id="2XQC">
    <property type="method" value="X-ray"/>
    <property type="resolution" value="1.90 A"/>
    <property type="chains" value="A/D=1-140"/>
</dbReference>
<dbReference type="PDBsum" id="2XM3"/>
<dbReference type="PDBsum" id="2XMA"/>
<dbReference type="PDBsum" id="2XO6"/>
<dbReference type="PDBsum" id="2XQC"/>
<dbReference type="SMR" id="Q7DF83"/>
<dbReference type="STRING" id="243230.DR_0667"/>
<dbReference type="PaxDb" id="243230-DR_0667"/>
<dbReference type="EnsemblBacteria" id="AAF10242">
    <property type="protein sequence ID" value="AAF10242"/>
    <property type="gene ID" value="DR_0667"/>
</dbReference>
<dbReference type="EnsemblBacteria" id="AAF10556">
    <property type="protein sequence ID" value="AAF10556"/>
    <property type="gene ID" value="DR_0979"/>
</dbReference>
<dbReference type="EnsemblBacteria" id="AAF10953">
    <property type="protein sequence ID" value="AAF10953"/>
    <property type="gene ID" value="DR_1382"/>
</dbReference>
<dbReference type="EnsemblBacteria" id="AAF11155">
    <property type="protein sequence ID" value="AAF11155"/>
    <property type="gene ID" value="DR_1592"/>
</dbReference>
<dbReference type="EnsemblBacteria" id="AAF11209">
    <property type="protein sequence ID" value="AAF11209"/>
    <property type="gene ID" value="DR_1652"/>
</dbReference>
<dbReference type="EnsemblBacteria" id="AAF11485">
    <property type="protein sequence ID" value="AAF11485"/>
    <property type="gene ID" value="DR_1932"/>
</dbReference>
<dbReference type="EnsemblBacteria" id="AAF11871">
    <property type="protein sequence ID" value="AAF11871"/>
    <property type="gene ID" value="DR_2323"/>
</dbReference>
<dbReference type="GeneID" id="69517887"/>
<dbReference type="KEGG" id="dra:DR_0667"/>
<dbReference type="KEGG" id="dra:DR_0979"/>
<dbReference type="KEGG" id="dra:DR_1382"/>
<dbReference type="KEGG" id="dra:DR_1592"/>
<dbReference type="KEGG" id="dra:DR_1652"/>
<dbReference type="KEGG" id="dra:DR_1932"/>
<dbReference type="KEGG" id="dra:DR_2323"/>
<dbReference type="PATRIC" id="fig|243230.17.peg.1166"/>
<dbReference type="eggNOG" id="COG1943">
    <property type="taxonomic scope" value="Bacteria"/>
</dbReference>
<dbReference type="HOGENOM" id="CLU_101320_2_0_0"/>
<dbReference type="InParanoid" id="Q7DF83"/>
<dbReference type="OrthoDB" id="9798161at2"/>
<dbReference type="EvolutionaryTrace" id="Q7DF83"/>
<dbReference type="Proteomes" id="UP000002524">
    <property type="component" value="Chromosome 1"/>
</dbReference>
<dbReference type="GO" id="GO:0003677">
    <property type="term" value="F:DNA binding"/>
    <property type="evidence" value="ECO:0007669"/>
    <property type="project" value="UniProtKB-KW"/>
</dbReference>
<dbReference type="GO" id="GO:0004519">
    <property type="term" value="F:endonuclease activity"/>
    <property type="evidence" value="ECO:0007669"/>
    <property type="project" value="UniProtKB-KW"/>
</dbReference>
<dbReference type="GO" id="GO:0046872">
    <property type="term" value="F:metal ion binding"/>
    <property type="evidence" value="ECO:0007669"/>
    <property type="project" value="UniProtKB-KW"/>
</dbReference>
<dbReference type="GO" id="GO:0004803">
    <property type="term" value="F:transposase activity"/>
    <property type="evidence" value="ECO:0000314"/>
    <property type="project" value="UniProtKB"/>
</dbReference>
<dbReference type="GO" id="GO:0006313">
    <property type="term" value="P:DNA transposition"/>
    <property type="evidence" value="ECO:0000314"/>
    <property type="project" value="UniProtKB"/>
</dbReference>
<dbReference type="Gene3D" id="3.30.70.1290">
    <property type="entry name" value="Transposase IS200-like"/>
    <property type="match status" value="1"/>
</dbReference>
<dbReference type="InterPro" id="IPR002686">
    <property type="entry name" value="Transposase_17"/>
</dbReference>
<dbReference type="InterPro" id="IPR036515">
    <property type="entry name" value="Transposase_17_sf"/>
</dbReference>
<dbReference type="NCBIfam" id="NF033573">
    <property type="entry name" value="transpos_IS200"/>
    <property type="match status" value="1"/>
</dbReference>
<dbReference type="PANTHER" id="PTHR33360">
    <property type="entry name" value="TRANSPOSASE FOR INSERTION SEQUENCE ELEMENT IS200"/>
    <property type="match status" value="1"/>
</dbReference>
<dbReference type="PANTHER" id="PTHR33360:SF2">
    <property type="entry name" value="TRANSPOSASE FOR INSERTION SEQUENCE ELEMENT IS200"/>
    <property type="match status" value="1"/>
</dbReference>
<dbReference type="Pfam" id="PF01797">
    <property type="entry name" value="Y1_Tnp"/>
    <property type="match status" value="1"/>
</dbReference>
<dbReference type="SMART" id="SM01321">
    <property type="entry name" value="Y1_Tnp"/>
    <property type="match status" value="1"/>
</dbReference>
<dbReference type="SUPFAM" id="SSF143422">
    <property type="entry name" value="Transposase IS200-like"/>
    <property type="match status" value="1"/>
</dbReference>
<sequence length="140" mass="16115">MTYVILPLEMKKGRGYVYQLEYHLIWCVKYRHQVLVGEVADGLKDILRDIAAQNGLEVITMEVMPDHVHLLLSATPQQAIPDFVKALKGASARRMFVAYPQLKEKLWGGNLWNPSYCILTVSENTRAQIQKYIESQHDKE</sequence>
<comment type="function">
    <text evidence="2 3 4 5 6 12">A transposase that is part of insertion sequence (IS) element ISDra2, it is necessary and sufficient for both transposon excision and insertion of ISDra2. This protein alone can be provided in trans and allows transposition of an empty IS element (tnpA or tnpA-tnpB replaced by a selectable marker) (PubMed:16359337, PubMed:20090938). ISDra2 binds subterminal imperfect palindromes at the left (LE) and right (RE) ends of the element and cleaves only the 'top strand' which is circularized and subsequently reinserted into the DNA target. This is called a 'peel and paste' mechanism and increases the copy number of the IS (Probable) (PubMed:20890269). Transposition is linked to DNA replication in the absence of irradiation, with maximal activity when the 'top strand' is on the replication lagging strand, and occurs preferentially on the lagging strand (PubMed:20691900). The IS element inserts 3' of the target sequence 5'-TTGAT-3'; target duplication has not been observed (PubMed:14676423, PubMed:16359337, PubMed:20090938, PubMed:20691900).</text>
</comment>
<comment type="cofactor">
    <cofactor evidence="6">
        <name>Mg(2+)</name>
        <dbReference type="ChEBI" id="CHEBI:18420"/>
    </cofactor>
    <text evidence="6">Mg(2+), Mn(2+) and Cd(2+) support DNA cleavage whereas Ca(2+) and Zn(2+) do not.</text>
</comment>
<comment type="activity regulation">
    <text evidence="7">Both the excision and insertion steps are inhibited by TnpB.</text>
</comment>
<comment type="subunit">
    <text evidence="6">Homodimer.</text>
</comment>
<comment type="induction">
    <text evidence="3 4">Transposition of this element is induced approximately 100-fold by 10 kGy gamma irradiation and approximately 50-fold by 600 J/m(2) of UV irradiation, both of which damage DNA. It rarely transposes without irradiation (PubMed:16359337). Both excision and insertion of ISDra2 are increased by irradiation, transposition occurs in irradiated cells, probably triggered by single-stranded DNA formed during genome reassembly, and is not due to specific induction of TnpA expression (PubMed:20090938).</text>
</comment>
<comment type="domain">
    <text evidence="6">The helix containing the catalytic Tyr-132 (residues 127-133) is highly mobile. Recognition of the 5-base sequence immediately preceding the cleavage site is mediated by base-pairing to an imperfect palindrome, by sandwiching the fifth nucleotide between Tyr-30 and Trp-107 and hydrogen bonding to His-32, and by main chain atoms of Leu-106 and Trp-107.</text>
</comment>
<comment type="disruption phenotype">
    <text evidence="4 7">When tested in an R1 strain with only a single IS200 element (DR_1651 and DR_1652), required for transposition of the IS element; single tnpA or double tnpA-tnpB deletions leads to loss of transposition.</text>
</comment>
<comment type="miscellaneous">
    <text evidence="1 2 3 4 8 9">Belongs to the IS200/IS605 insertion sequence (IS) element family, formerly called IS8301 (PubMed:14676423, PubMed:20090938). This element is subject to strain polymorphism; in the ATCC 13939 / R1 strain genome sequenced by White there are 7 complete and 1 incomplete IS200/IS605 elements (PubMed:10567266). Another R1 strain has only 1 copy of this element (PubMed:14676423, PubMed:20090938). Another group found 2 copies of this element in untreated R1 strains (PubMed:10567266, PubMed:14676423, PubMed:16359337, PubMed:20090938).</text>
</comment>
<comment type="similarity">
    <text evidence="11">Belongs to the transposase 17 family.</text>
</comment>
<proteinExistence type="evidence at protein level"/>
<organism>
    <name type="scientific">Deinococcus radiodurans (strain ATCC 13939 / DSM 20539 / JCM 16871 / CCUG 27074 / LMG 4051 / NBRC 15346 / NCIMB 9279 / VKM B-1422 / R1)</name>
    <dbReference type="NCBI Taxonomy" id="243230"/>
    <lineage>
        <taxon>Bacteria</taxon>
        <taxon>Thermotogati</taxon>
        <taxon>Deinococcota</taxon>
        <taxon>Deinococci</taxon>
        <taxon>Deinococcales</taxon>
        <taxon>Deinococcaceae</taxon>
        <taxon>Deinococcus</taxon>
    </lineage>
</organism>
<reference evidence="21" key="1">
    <citation type="journal article" date="2003" name="Genes Genet. Syst.">
        <title>Characterization and distribution of IS8301 in the radioresistant bacterium Deinococcus radiodurans.</title>
        <authorList>
            <person name="Islam S.M."/>
            <person name="Hua Y."/>
            <person name="Ohba H."/>
            <person name="Satoh K."/>
            <person name="Kikuchi M."/>
            <person name="Yanagisawa T."/>
            <person name="Narumi I."/>
        </authorList>
    </citation>
    <scope>NUCLEOTIDE SEQUENCE [GENOMIC DNA]</scope>
    <scope>INSERTION SITE</scope>
    <scope>NOMENCLATURE IS8301</scope>
    <source>
        <strain>R1 / KD8301</strain>
    </source>
</reference>
<reference evidence="16" key="2">
    <citation type="journal article" date="1999" name="Science">
        <title>Genome sequence of the radioresistant bacterium Deinococcus radiodurans R1.</title>
        <authorList>
            <person name="White O."/>
            <person name="Eisen J.A."/>
            <person name="Heidelberg J.F."/>
            <person name="Hickey E.K."/>
            <person name="Peterson J.D."/>
            <person name="Dodson R.J."/>
            <person name="Haft D.H."/>
            <person name="Gwinn M.L."/>
            <person name="Nelson W.C."/>
            <person name="Richardson D.L."/>
            <person name="Moffat K.S."/>
            <person name="Qin H."/>
            <person name="Jiang L."/>
            <person name="Pamphile W."/>
            <person name="Crosby M."/>
            <person name="Shen M."/>
            <person name="Vamathevan J.J."/>
            <person name="Lam P."/>
            <person name="McDonald L.A."/>
            <person name="Utterback T.R."/>
            <person name="Zalewski C."/>
            <person name="Makarova K.S."/>
            <person name="Aravind L."/>
            <person name="Daly M.J."/>
            <person name="Minton K.W."/>
            <person name="Fleischmann R.D."/>
            <person name="Ketchum K.A."/>
            <person name="Nelson K.E."/>
            <person name="Salzberg S.L."/>
            <person name="Smith H.O."/>
            <person name="Venter J.C."/>
            <person name="Fraser C.M."/>
        </authorList>
    </citation>
    <scope>NUCLEOTIDE SEQUENCE [LARGE SCALE GENOMIC DNA]</scope>
    <source>
        <strain>ATCC 13939 / DSM 20539 / JCM 16871 / CCUG 27074 / LMG 4051 / NBRC 15346 / NCIMB 9279 / VKM B-1422 / R1</strain>
    </source>
</reference>
<reference key="3">
    <citation type="journal article" date="2006" name="Mol. Microbiol.">
        <title>Mutagenesis via IS transposition in Deinococcus radiodurans.</title>
        <authorList>
            <person name="Mennecier S."/>
            <person name="Servant P."/>
            <person name="Coste G."/>
            <person name="Bailone A."/>
            <person name="Sommer S."/>
        </authorList>
    </citation>
    <scope>FUNCTION</scope>
    <scope>TRANSPOSITION</scope>
    <scope>INDUCTION BY IRRADIATION</scope>
    <scope>NOMENCLATURE ISDRA2</scope>
    <source>
        <strain>ATCC 13939 / DSM 20539 / JCM 16871 / CCUG 27074 / LMG 4051 / NBRC 15346 / NCIMB 9279 / VKM B-1422 / R1</strain>
    </source>
</reference>
<reference key="4">
    <citation type="journal article" date="2010" name="PLoS Genet.">
        <title>Irradiation-induced Deinococcus radiodurans genome fragmentation triggers transposition of a single resident insertion sequence.</title>
        <authorList>
            <person name="Pasternak C."/>
            <person name="Ton-Hoang B."/>
            <person name="Coste G."/>
            <person name="Bailone A."/>
            <person name="Chandler M."/>
            <person name="Sommer S."/>
        </authorList>
    </citation>
    <scope>FUNCTION</scope>
    <scope>REACTION MECHANISM</scope>
    <scope>TRANSPOSITION</scope>
    <scope>INDUCTION BY IRRADIATION</scope>
    <scope>DISRUPTION PHENOTYPE</scope>
    <source>
        <strain>R1 / ISDra2f</strain>
    </source>
</reference>
<reference key="5">
    <citation type="journal article" date="2010" name="Cell">
        <title>Single-stranded DNA transposition is coupled to host replication.</title>
        <authorList>
            <person name="Ton-Hoang B."/>
            <person name="Pasternak C."/>
            <person name="Siguier P."/>
            <person name="Guynet C."/>
            <person name="Hickman A.B."/>
            <person name="Dyda F."/>
            <person name="Sommer S."/>
            <person name="Chandler M."/>
        </authorList>
    </citation>
    <scope>TRANSPOSITION INTO LAGGING STRAND</scope>
    <source>
        <strain>R1 / ISDra2f</strain>
    </source>
</reference>
<reference key="6">
    <citation type="journal article" date="2013" name="Mol. Microbiol.">
        <title>ISDra2 transposition in Deinococcus radiodurans is downregulated by TnpB.</title>
        <authorList>
            <person name="Pasternak C."/>
            <person name="Dulermo R."/>
            <person name="Ton-Hoang B."/>
            <person name="Debuchy R."/>
            <person name="Siguier P."/>
            <person name="Coste G."/>
            <person name="Chandler M."/>
            <person name="Sommer S."/>
        </authorList>
    </citation>
    <scope>FUNCTION</scope>
    <scope>ACTIVITY REGULATION</scope>
    <scope>DISRUPTION PHENOTYPE</scope>
    <source>
        <strain>R1 / ISDra2f</strain>
    </source>
</reference>
<reference evidence="22 23 24 25" key="7">
    <citation type="journal article" date="2010" name="EMBO J.">
        <title>DNA recognition and the precleavage state during single-stranded DNA transposition in D. radiodurans.</title>
        <authorList>
            <person name="Hickman A.B."/>
            <person name="James J.A."/>
            <person name="Barabas O."/>
            <person name="Pasternak C."/>
            <person name="Ton-Hoang B."/>
            <person name="Chandler M."/>
            <person name="Sommer S."/>
            <person name="Dyda F."/>
        </authorList>
    </citation>
    <scope>X-RAY CRYSTALLOGRAPHY (1.90 ANGSTROMS) IN COMPLEX WITH MAGNESIUM AND DNA</scope>
    <scope>COFACTOR</scope>
    <scope>SUBUNIT</scope>
    <scope>DOMAIN</scope>
    <scope>ACTIVE SITE</scope>
    <scope>MUTAGENESIS OF ARG-14 AND 122-SER-GLU-123</scope>
</reference>
<name>DRA2A_DEIRA</name>
<evidence type="ECO:0000269" key="1">
    <source>
    </source>
</evidence>
<evidence type="ECO:0000269" key="2">
    <source>
    </source>
</evidence>
<evidence type="ECO:0000269" key="3">
    <source>
    </source>
</evidence>
<evidence type="ECO:0000269" key="4">
    <source>
    </source>
</evidence>
<evidence type="ECO:0000269" key="5">
    <source>
    </source>
</evidence>
<evidence type="ECO:0000269" key="6">
    <source>
    </source>
</evidence>
<evidence type="ECO:0000269" key="7">
    <source>
    </source>
</evidence>
<evidence type="ECO:0000303" key="8">
    <source>
    </source>
</evidence>
<evidence type="ECO:0000303" key="9">
    <source>
    </source>
</evidence>
<evidence type="ECO:0000303" key="10">
    <source>
    </source>
</evidence>
<evidence type="ECO:0000305" key="11"/>
<evidence type="ECO:0000305" key="12">
    <source>
    </source>
</evidence>
<evidence type="ECO:0000305" key="13">
    <source>
    </source>
</evidence>
<evidence type="ECO:0000312" key="14">
    <source>
        <dbReference type="EMBL" id="AAF10242.1"/>
    </source>
</evidence>
<evidence type="ECO:0000312" key="15">
    <source>
        <dbReference type="EMBL" id="AAF10556.1"/>
    </source>
</evidence>
<evidence type="ECO:0000312" key="16">
    <source>
        <dbReference type="EMBL" id="AAF10953.1"/>
    </source>
</evidence>
<evidence type="ECO:0000312" key="17">
    <source>
        <dbReference type="EMBL" id="AAF11155.1"/>
    </source>
</evidence>
<evidence type="ECO:0000312" key="18">
    <source>
        <dbReference type="EMBL" id="AAF11209.1"/>
    </source>
</evidence>
<evidence type="ECO:0000312" key="19">
    <source>
        <dbReference type="EMBL" id="AAF11485.1"/>
    </source>
</evidence>
<evidence type="ECO:0000312" key="20">
    <source>
        <dbReference type="EMBL" id="AAF11871.1"/>
    </source>
</evidence>
<evidence type="ECO:0000312" key="21">
    <source>
        <dbReference type="EMBL" id="BAA32389.1"/>
    </source>
</evidence>
<evidence type="ECO:0007744" key="22">
    <source>
        <dbReference type="PDB" id="2XM3"/>
    </source>
</evidence>
<evidence type="ECO:0007744" key="23">
    <source>
        <dbReference type="PDB" id="2XMA"/>
    </source>
</evidence>
<evidence type="ECO:0007744" key="24">
    <source>
        <dbReference type="PDB" id="2XO6"/>
    </source>
</evidence>
<evidence type="ECO:0007744" key="25">
    <source>
        <dbReference type="PDB" id="2XQC"/>
    </source>
</evidence>
<evidence type="ECO:0007829" key="26">
    <source>
        <dbReference type="PDB" id="2XO6"/>
    </source>
</evidence>